<accession>Q89B34</accession>
<protein>
    <recommendedName>
        <fullName evidence="1">Membrane protein insertase YidC</fullName>
    </recommendedName>
    <alternativeName>
        <fullName evidence="1">Foldase YidC</fullName>
    </alternativeName>
    <alternativeName>
        <fullName evidence="1">Membrane integrase YidC</fullName>
    </alternativeName>
    <alternativeName>
        <fullName evidence="1">Membrane protein YidC</fullName>
    </alternativeName>
</protein>
<evidence type="ECO:0000255" key="1">
    <source>
        <dbReference type="HAMAP-Rule" id="MF_01810"/>
    </source>
</evidence>
<name>YIDC_BUCBP</name>
<gene>
    <name evidence="1" type="primary">yidC</name>
    <name type="ordered locus">bbp_016</name>
</gene>
<keyword id="KW-1003">Cell membrane</keyword>
<keyword id="KW-0143">Chaperone</keyword>
<keyword id="KW-0472">Membrane</keyword>
<keyword id="KW-0653">Protein transport</keyword>
<keyword id="KW-1185">Reference proteome</keyword>
<keyword id="KW-0812">Transmembrane</keyword>
<keyword id="KW-1133">Transmembrane helix</keyword>
<keyword id="KW-0813">Transport</keyword>
<organism>
    <name type="scientific">Buchnera aphidicola subsp. Baizongia pistaciae (strain Bp)</name>
    <dbReference type="NCBI Taxonomy" id="224915"/>
    <lineage>
        <taxon>Bacteria</taxon>
        <taxon>Pseudomonadati</taxon>
        <taxon>Pseudomonadota</taxon>
        <taxon>Gammaproteobacteria</taxon>
        <taxon>Enterobacterales</taxon>
        <taxon>Erwiniaceae</taxon>
        <taxon>Buchnera</taxon>
    </lineage>
</organism>
<proteinExistence type="inferred from homology"/>
<dbReference type="EMBL" id="AE016826">
    <property type="protein sequence ID" value="AAO26760.1"/>
    <property type="molecule type" value="Genomic_DNA"/>
</dbReference>
<dbReference type="RefSeq" id="WP_011091161.1">
    <property type="nucleotide sequence ID" value="NC_004545.1"/>
</dbReference>
<dbReference type="SMR" id="Q89B34"/>
<dbReference type="STRING" id="224915.bbp_016"/>
<dbReference type="KEGG" id="bab:bbp_016"/>
<dbReference type="eggNOG" id="COG0706">
    <property type="taxonomic scope" value="Bacteria"/>
</dbReference>
<dbReference type="HOGENOM" id="CLU_016535_3_0_6"/>
<dbReference type="OrthoDB" id="9780552at2"/>
<dbReference type="Proteomes" id="UP000000601">
    <property type="component" value="Chromosome"/>
</dbReference>
<dbReference type="GO" id="GO:0005886">
    <property type="term" value="C:plasma membrane"/>
    <property type="evidence" value="ECO:0007669"/>
    <property type="project" value="UniProtKB-SubCell"/>
</dbReference>
<dbReference type="GO" id="GO:0032977">
    <property type="term" value="F:membrane insertase activity"/>
    <property type="evidence" value="ECO:0007669"/>
    <property type="project" value="InterPro"/>
</dbReference>
<dbReference type="GO" id="GO:0051205">
    <property type="term" value="P:protein insertion into membrane"/>
    <property type="evidence" value="ECO:0007669"/>
    <property type="project" value="TreeGrafter"/>
</dbReference>
<dbReference type="GO" id="GO:0015031">
    <property type="term" value="P:protein transport"/>
    <property type="evidence" value="ECO:0007669"/>
    <property type="project" value="UniProtKB-KW"/>
</dbReference>
<dbReference type="CDD" id="cd20070">
    <property type="entry name" value="5TM_YidC_Alb3"/>
    <property type="match status" value="1"/>
</dbReference>
<dbReference type="CDD" id="cd19961">
    <property type="entry name" value="EcYidC-like_peri"/>
    <property type="match status" value="1"/>
</dbReference>
<dbReference type="Gene3D" id="2.70.98.90">
    <property type="match status" value="1"/>
</dbReference>
<dbReference type="HAMAP" id="MF_01810">
    <property type="entry name" value="YidC_type1"/>
    <property type="match status" value="1"/>
</dbReference>
<dbReference type="InterPro" id="IPR019998">
    <property type="entry name" value="Membr_insert_YidC"/>
</dbReference>
<dbReference type="InterPro" id="IPR028053">
    <property type="entry name" value="Membr_insert_YidC_N"/>
</dbReference>
<dbReference type="InterPro" id="IPR001708">
    <property type="entry name" value="YidC/ALB3/OXA1/COX18"/>
</dbReference>
<dbReference type="InterPro" id="IPR028055">
    <property type="entry name" value="YidC/Oxa/ALB_C"/>
</dbReference>
<dbReference type="InterPro" id="IPR047196">
    <property type="entry name" value="YidC_ALB_C"/>
</dbReference>
<dbReference type="InterPro" id="IPR038221">
    <property type="entry name" value="YidC_periplasmic_sf"/>
</dbReference>
<dbReference type="NCBIfam" id="NF002351">
    <property type="entry name" value="PRK01318.1-1"/>
    <property type="match status" value="1"/>
</dbReference>
<dbReference type="NCBIfam" id="NF002352">
    <property type="entry name" value="PRK01318.1-3"/>
    <property type="match status" value="1"/>
</dbReference>
<dbReference type="NCBIfam" id="TIGR03593">
    <property type="entry name" value="yidC_nterm"/>
    <property type="match status" value="1"/>
</dbReference>
<dbReference type="NCBIfam" id="TIGR03592">
    <property type="entry name" value="yidC_oxa1_cterm"/>
    <property type="match status" value="1"/>
</dbReference>
<dbReference type="PANTHER" id="PTHR12428:SF65">
    <property type="entry name" value="CYTOCHROME C OXIDASE ASSEMBLY PROTEIN COX18, MITOCHONDRIAL"/>
    <property type="match status" value="1"/>
</dbReference>
<dbReference type="PANTHER" id="PTHR12428">
    <property type="entry name" value="OXA1"/>
    <property type="match status" value="1"/>
</dbReference>
<dbReference type="Pfam" id="PF02096">
    <property type="entry name" value="60KD_IMP"/>
    <property type="match status" value="1"/>
</dbReference>
<dbReference type="Pfam" id="PF14849">
    <property type="entry name" value="YidC_periplas"/>
    <property type="match status" value="1"/>
</dbReference>
<dbReference type="PRINTS" id="PR00701">
    <property type="entry name" value="60KDINNERMP"/>
</dbReference>
<dbReference type="PRINTS" id="PR01900">
    <property type="entry name" value="YIDCPROTEIN"/>
</dbReference>
<sequence length="536" mass="62375">MHLQRNFFILIFFFISFLLWKTWQQKEFSSDVHKIINKYENVNLVNNNINKLASNIIIKTDVLKIQVNLYGGDIEKAELLHFKSKLNSSQSLVLLDTNENFVYQAQCGITGKDGADNLQKHIRPLYIAKRKYYELSRHNKKIEVPLQWISKDGIIYKKIFVLKSGEYDVSVKYKINNITNKHLKVSMFGQLKQTINLPEDKNTYTNNFALQTFRGAAYSSDNDKYVKYSFDSIVNKEKKNIVVTHSGWVAMLQKYFATSWIPDNSYLNTMYIGSSGDNLAEIGYYSRPIDIFPHSTISLSSKLWIGPEIQNKMAVIASNLDLTVDYGWLWFLSQPLFKLLNFLYNICGNWGVSIILITFIIKGITFPLTKSQFKTMAKIRKLQPKINYIKKKFKNNNQKISEEIMSLYKTEKVNPLGGCFPLFIQMPIFLALYYMLISSVELRHAPFFLWIHDLSDQDPFYVLPILMGVTMFFIQRVTPSNVTDPVQKKIMNYIPILFTVFFLWFPSGLVLYYLISNLVTIIQQKIIIKALNKTLK</sequence>
<comment type="function">
    <text evidence="1">Required for the insertion and/or proper folding and/or complex formation of integral membrane proteins into the membrane. Involved in integration of membrane proteins that insert both dependently and independently of the Sec translocase complex, as well as at least some lipoproteins. Aids folding of multispanning membrane proteins.</text>
</comment>
<comment type="subunit">
    <text evidence="1">Interacts with the Sec translocase complex via SecD. Specifically interacts with transmembrane segments of nascent integral membrane proteins during membrane integration.</text>
</comment>
<comment type="subcellular location">
    <subcellularLocation>
        <location evidence="1">Cell membrane</location>
        <topology evidence="1">Multi-pass membrane protein</topology>
    </subcellularLocation>
</comment>
<comment type="similarity">
    <text evidence="1">Belongs to the OXA1/ALB3/YidC family. Type 1 subfamily.</text>
</comment>
<feature type="chain" id="PRO_0000124698" description="Membrane protein insertase YidC">
    <location>
        <begin position="1"/>
        <end position="536"/>
    </location>
</feature>
<feature type="transmembrane region" description="Helical" evidence="1">
    <location>
        <begin position="3"/>
        <end position="23"/>
    </location>
</feature>
<feature type="transmembrane region" description="Helical" evidence="1">
    <location>
        <begin position="346"/>
        <end position="366"/>
    </location>
</feature>
<feature type="transmembrane region" description="Helical" evidence="1">
    <location>
        <begin position="417"/>
        <end position="437"/>
    </location>
</feature>
<feature type="transmembrane region" description="Helical" evidence="1">
    <location>
        <begin position="454"/>
        <end position="474"/>
    </location>
</feature>
<feature type="transmembrane region" description="Helical" evidence="1">
    <location>
        <begin position="494"/>
        <end position="514"/>
    </location>
</feature>
<reference key="1">
    <citation type="journal article" date="2003" name="Proc. Natl. Acad. Sci. U.S.A.">
        <title>Reductive genome evolution in Buchnera aphidicola.</title>
        <authorList>
            <person name="van Ham R.C.H.J."/>
            <person name="Kamerbeek J."/>
            <person name="Palacios C."/>
            <person name="Rausell C."/>
            <person name="Abascal F."/>
            <person name="Bastolla U."/>
            <person name="Fernandez J.M."/>
            <person name="Jimenez L."/>
            <person name="Postigo M."/>
            <person name="Silva F.J."/>
            <person name="Tamames J."/>
            <person name="Viguera E."/>
            <person name="Latorre A."/>
            <person name="Valencia A."/>
            <person name="Moran F."/>
            <person name="Moya A."/>
        </authorList>
    </citation>
    <scope>NUCLEOTIDE SEQUENCE [LARGE SCALE GENOMIC DNA]</scope>
    <source>
        <strain>Bp</strain>
    </source>
</reference>